<feature type="signal peptide" evidence="2">
    <location>
        <begin position="1"/>
        <end position="18"/>
    </location>
</feature>
<feature type="chain" id="PRO_0000436648" description="Envelope glycoprotein H" evidence="2">
    <location>
        <begin position="19"/>
        <end position="706"/>
    </location>
</feature>
<feature type="topological domain" description="Virion surface" evidence="2">
    <location>
        <begin position="19"/>
        <end position="682"/>
    </location>
</feature>
<feature type="transmembrane region" description="Helical" evidence="2">
    <location>
        <begin position="683"/>
        <end position="703"/>
    </location>
</feature>
<feature type="topological domain" description="Intravirion" evidence="2">
    <location>
        <begin position="704"/>
        <end position="706"/>
    </location>
</feature>
<feature type="region of interest" description="Interaction with gL" evidence="2">
    <location>
        <begin position="165"/>
        <end position="229"/>
    </location>
</feature>
<feature type="glycosylation site" description="N-linked (GlcNAc...) asparagine; by host" evidence="2">
    <location>
        <position position="60"/>
    </location>
</feature>
<feature type="glycosylation site" description="N-linked (GlcNAc...) asparagine; by host" evidence="2">
    <location>
        <position position="435"/>
    </location>
</feature>
<feature type="glycosylation site" description="N-linked (GlcNAc...) asparagine; by host" evidence="2">
    <location>
        <position position="549"/>
    </location>
</feature>
<feature type="glycosylation site" description="N-linked (GlcNAc...) asparagine; by host" evidence="2">
    <location>
        <position position="604"/>
    </location>
</feature>
<feature type="glycosylation site" description="N-linked (GlcNAc...) asparagine; by host" evidence="2">
    <location>
        <position position="664"/>
    </location>
</feature>
<feature type="disulfide bond" evidence="1">
    <location>
        <begin position="278"/>
        <end position="335"/>
    </location>
</feature>
<feature type="disulfide bond" evidence="1">
    <location>
        <begin position="454"/>
        <end position="478"/>
    </location>
</feature>
<feature type="disulfide bond" evidence="1">
    <location>
        <begin position="534"/>
        <end position="587"/>
    </location>
</feature>
<feature type="disulfide bond" evidence="1">
    <location>
        <begin position="612"/>
        <end position="615"/>
    </location>
</feature>
<proteinExistence type="inferred from homology"/>
<reference key="1">
    <citation type="journal article" date="2006" name="Virology">
        <title>The genome of Epstein-Barr virus type 2 strain AG876.</title>
        <authorList>
            <person name="Dolan A."/>
            <person name="Addison C."/>
            <person name="Gatherer D."/>
            <person name="Davison A.J."/>
            <person name="McGeoch D.J."/>
        </authorList>
    </citation>
    <scope>NUCLEOTIDE SEQUENCE [LARGE SCALE GENOMIC DNA]</scope>
</reference>
<name>GH_EBVA8</name>
<sequence>MQLLCVFCLVLLWEVGAASLSEVKLHLDIEGHASHYTIPWTELMAKVPGLSPEALWREANVTEDLASMLNRYKLIYKTSGTLGIALAEPVDIPAVSEGSMQVDASKVHPGVISGLNSPACMLSAPLEKQLFYYIGTMLPNTRPHSYVFYQLRCHLSYVALSINGDKFQYTGAMTSKFLMGTYKRVTEKGDEHVLSLIFGKTKDLPDLRGPFSYPSLTSAQSGDYSLVIVTTFVHYANFHNYFVPNLKDMFSRAVTMTAASYARYVLQKLVLLEMKGGCREPELDTETLTTMFEVSVAFFKVGHAVGETGNGCVDLRWLAKSFFELTVLKDIIGICYGATVKGMQSYGLERLAAVLMATVKMEELGHLTTEKQEYALRLATVGYPKAGVYSGLIGGATSVLLSAYNRHPLFQPLHTVMRETLFIGSHVVLRELRLNVTTQGPNLALYQLLSTALCSALEIGEVLRGLALGTESGLFSPCYLSLRFDLTRDKLLSMAPQEAMLDQAAVSNAVDGFLGRLSLEREDRDAWHLPAYKCVDRLDKVLMIIPLINVTFIISSDREVRGSALYEASTTYLSSSLFLSPVIMNKCSQGAVAGEPRQIPKIQNFTRTQKSCIFCGFALLSYDEKEGLETTTYITSQEVQNSILSSNYFDFDNLHVHYLLLTTNGTVMEIAGLYEERAHVVLAIILYFIAFALGIFLVHKIVMFFL</sequence>
<comment type="function">
    <text evidence="1 2">The heterodimer glycoprotein H-glycoprotein L is required for the fusion of viral and plasma membranes leading to virus entry into the host cell. Following initial binding to host receptor, membrane fusion is mediated by the fusion machinery composed of gB and the heterodimer gH/gL. May also be involved in the fusion between the virion envelope and the outer nuclear membrane during virion morphogenesis. The heterodimer gH/gL targets also host EPHA2 to promote viral entry.</text>
</comment>
<comment type="subunit">
    <text evidence="1 2">Interacts with glycoprotein L (gL); this interaction is necessary for the correct processing and cell surface expression of gH. The heterodimer gH/gL seems to interact with gB trimers during fusion. The heterodimer gH/gL interacts with host EPHA2 to facilitate virus internalization and fusion. Interacts with glycoprotein 42/BZLF2.</text>
</comment>
<comment type="subcellular location">
    <subcellularLocation>
        <location evidence="2">Virion membrane</location>
        <topology evidence="2">Single-pass type I membrane protein</topology>
    </subcellularLocation>
    <subcellularLocation>
        <location evidence="2">Host cell membrane</location>
        <topology evidence="2">Single-pass type I membrane protein</topology>
    </subcellularLocation>
    <subcellularLocation>
        <location evidence="2">Host endosome membrane</location>
        <topology evidence="2">Single-pass type I membrane protein</topology>
    </subcellularLocation>
    <text evidence="2">During virion morphogenesis, this protein probably accumulates in the endosomes and trans-Golgi where secondary envelopment occurs. It is probably transported to the cell surface from where it is endocytosed and directed to the trans-Golgi network (TGN).</text>
</comment>
<comment type="PTM">
    <text evidence="2">N-glycosylated, O-glycosylated, and sialylated.</text>
</comment>
<comment type="similarity">
    <text evidence="2">Belongs to the herpesviridae glycoprotein H family.</text>
</comment>
<gene>
    <name evidence="2" type="primary">gH</name>
    <name type="ORF">BXLF2</name>
</gene>
<protein>
    <recommendedName>
        <fullName evidence="2">Envelope glycoprotein H</fullName>
        <shortName evidence="2">gH</shortName>
    </recommendedName>
</protein>
<organismHost>
    <name type="scientific">Homo sapiens</name>
    <name type="common">Human</name>
    <dbReference type="NCBI Taxonomy" id="9606"/>
</organismHost>
<accession>Q1HVD2</accession>
<evidence type="ECO:0000250" key="1">
    <source>
        <dbReference type="UniProtKB" id="P03231"/>
    </source>
</evidence>
<evidence type="ECO:0000255" key="2">
    <source>
        <dbReference type="HAMAP-Rule" id="MF_04033"/>
    </source>
</evidence>
<dbReference type="EMBL" id="DQ279927">
    <property type="protein sequence ID" value="ABB89276.1"/>
    <property type="molecule type" value="Genomic_DNA"/>
</dbReference>
<dbReference type="RefSeq" id="YP_001129496.1">
    <property type="nucleotide sequence ID" value="NC_009334.1"/>
</dbReference>
<dbReference type="SMR" id="Q1HVD2"/>
<dbReference type="GlyCosmos" id="Q1HVD2">
    <property type="glycosylation" value="5 sites, No reported glycans"/>
</dbReference>
<dbReference type="KEGG" id="vg:5176171"/>
<dbReference type="Proteomes" id="UP000007639">
    <property type="component" value="Genome"/>
</dbReference>
<dbReference type="GO" id="GO:0044175">
    <property type="term" value="C:host cell endosome membrane"/>
    <property type="evidence" value="ECO:0007669"/>
    <property type="project" value="UniProtKB-SubCell"/>
</dbReference>
<dbReference type="GO" id="GO:0020002">
    <property type="term" value="C:host cell plasma membrane"/>
    <property type="evidence" value="ECO:0007669"/>
    <property type="project" value="UniProtKB-SubCell"/>
</dbReference>
<dbReference type="GO" id="GO:0016020">
    <property type="term" value="C:membrane"/>
    <property type="evidence" value="ECO:0007669"/>
    <property type="project" value="UniProtKB-KW"/>
</dbReference>
<dbReference type="GO" id="GO:0019031">
    <property type="term" value="C:viral envelope"/>
    <property type="evidence" value="ECO:0007669"/>
    <property type="project" value="UniProtKB-KW"/>
</dbReference>
<dbReference type="GO" id="GO:0055036">
    <property type="term" value="C:virion membrane"/>
    <property type="evidence" value="ECO:0007669"/>
    <property type="project" value="UniProtKB-SubCell"/>
</dbReference>
<dbReference type="GO" id="GO:0019064">
    <property type="term" value="P:fusion of virus membrane with host plasma membrane"/>
    <property type="evidence" value="ECO:0007669"/>
    <property type="project" value="UniProtKB-KW"/>
</dbReference>
<dbReference type="GO" id="GO:0046718">
    <property type="term" value="P:symbiont entry into host cell"/>
    <property type="evidence" value="ECO:0007669"/>
    <property type="project" value="UniProtKB-KW"/>
</dbReference>
<dbReference type="Gene3D" id="2.60.40.3190">
    <property type="entry name" value="Herpesvirus glycoprotein H, C-terminal domain"/>
    <property type="match status" value="1"/>
</dbReference>
<dbReference type="Gene3D" id="3.90.380.20">
    <property type="entry name" value="Herpesvirus glycoprotein H, domain D-II"/>
    <property type="match status" value="1"/>
</dbReference>
<dbReference type="HAMAP" id="MF_04033">
    <property type="entry name" value="HSV_GH"/>
    <property type="match status" value="1"/>
</dbReference>
<dbReference type="InterPro" id="IPR003493">
    <property type="entry name" value="Herpes_gH"/>
</dbReference>
<dbReference type="InterPro" id="IPR035305">
    <property type="entry name" value="Herpes_glycoH_C"/>
</dbReference>
<dbReference type="InterPro" id="IPR038172">
    <property type="entry name" value="Herpes_glycoH_C_sf"/>
</dbReference>
<dbReference type="Pfam" id="PF17488">
    <property type="entry name" value="Herpes_glycoH_C"/>
    <property type="match status" value="1"/>
</dbReference>
<dbReference type="Pfam" id="PF02489">
    <property type="entry name" value="Herpes_glycop_H"/>
    <property type="match status" value="1"/>
</dbReference>
<keyword id="KW-1015">Disulfide bond</keyword>
<keyword id="KW-1169">Fusion of virus membrane with host cell membrane</keyword>
<keyword id="KW-1168">Fusion of virus membrane with host membrane</keyword>
<keyword id="KW-0325">Glycoprotein</keyword>
<keyword id="KW-1032">Host cell membrane</keyword>
<keyword id="KW-1039">Host endosome</keyword>
<keyword id="KW-1043">Host membrane</keyword>
<keyword id="KW-0472">Membrane</keyword>
<keyword id="KW-1185">Reference proteome</keyword>
<keyword id="KW-0730">Sialic acid</keyword>
<keyword id="KW-0732">Signal</keyword>
<keyword id="KW-0812">Transmembrane</keyword>
<keyword id="KW-1133">Transmembrane helix</keyword>
<keyword id="KW-0261">Viral envelope protein</keyword>
<keyword id="KW-1162">Viral penetration into host cytoplasm</keyword>
<keyword id="KW-0946">Virion</keyword>
<keyword id="KW-1160">Virus entry into host cell</keyword>
<organism>
    <name type="scientific">Epstein-Barr virus (strain AG876)</name>
    <name type="common">HHV-4</name>
    <name type="synonym">Human herpesvirus 4</name>
    <dbReference type="NCBI Taxonomy" id="82830"/>
    <lineage>
        <taxon>Viruses</taxon>
        <taxon>Duplodnaviria</taxon>
        <taxon>Heunggongvirae</taxon>
        <taxon>Peploviricota</taxon>
        <taxon>Herviviricetes</taxon>
        <taxon>Herpesvirales</taxon>
        <taxon>Orthoherpesviridae</taxon>
        <taxon>Gammaherpesvirinae</taxon>
        <taxon>Lymphocryptovirus</taxon>
        <taxon>Lymphocryptovirus humangamma4</taxon>
        <taxon>Epstein-Barr virus (strain GD1)</taxon>
    </lineage>
</organism>